<protein>
    <recommendedName>
        <fullName evidence="1">Deoxyribose-phosphate aldolase</fullName>
        <shortName evidence="1">DERA</shortName>
        <ecNumber evidence="1">4.1.2.4</ecNumber>
    </recommendedName>
    <alternativeName>
        <fullName evidence="1">2-deoxy-D-ribose 5-phosphate aldolase</fullName>
    </alternativeName>
    <alternativeName>
        <fullName evidence="1">Phosphodeoxyriboaldolase</fullName>
        <shortName evidence="1">Deoxyriboaldolase</shortName>
    </alternativeName>
</protein>
<evidence type="ECO:0000255" key="1">
    <source>
        <dbReference type="HAMAP-Rule" id="MF_00114"/>
    </source>
</evidence>
<evidence type="ECO:0000305" key="2"/>
<accession>P43048</accession>
<comment type="function">
    <text evidence="1">Catalyzes a reversible aldol reaction between acetaldehyde and D-glyceraldehyde 3-phosphate to generate 2-deoxy-D-ribose 5-phosphate.</text>
</comment>
<comment type="catalytic activity">
    <reaction evidence="1">
        <text>2-deoxy-D-ribose 5-phosphate = D-glyceraldehyde 3-phosphate + acetaldehyde</text>
        <dbReference type="Rhea" id="RHEA:12821"/>
        <dbReference type="ChEBI" id="CHEBI:15343"/>
        <dbReference type="ChEBI" id="CHEBI:59776"/>
        <dbReference type="ChEBI" id="CHEBI:62877"/>
        <dbReference type="EC" id="4.1.2.4"/>
    </reaction>
</comment>
<comment type="pathway">
    <text evidence="1">Carbohydrate degradation; 2-deoxy-D-ribose 1-phosphate degradation; D-glyceraldehyde 3-phosphate and acetaldehyde from 2-deoxy-alpha-D-ribose 1-phosphate: step 2/2.</text>
</comment>
<comment type="subcellular location">
    <subcellularLocation>
        <location evidence="1">Cytoplasm</location>
    </subcellularLocation>
</comment>
<comment type="similarity">
    <text evidence="1 2">Belongs to the DeoC/FbaB aldolase family. DeoC type 1 subfamily.</text>
</comment>
<reference key="1">
    <citation type="thesis" date="1993" institute="Heinrich-Heine University / Duesseldorf" country="Germany">
        <authorList>
            <person name="Schuchart K."/>
        </authorList>
    </citation>
    <scope>NUCLEOTIDE SEQUENCE [GENOMIC DNA]</scope>
    <source>
        <strain>FBG</strain>
    </source>
</reference>
<gene>
    <name evidence="1" type="primary">deoC</name>
</gene>
<feature type="chain" id="PRO_0000057242" description="Deoxyribose-phosphate aldolase">
    <location>
        <begin position="1"/>
        <end position="217"/>
    </location>
</feature>
<feature type="active site" description="Proton donor/acceptor" evidence="1">
    <location>
        <position position="90"/>
    </location>
</feature>
<feature type="active site" description="Schiff-base intermediate with acetaldehyde" evidence="1">
    <location>
        <position position="152"/>
    </location>
</feature>
<feature type="active site" description="Proton donor/acceptor" evidence="1">
    <location>
        <position position="181"/>
    </location>
</feature>
<name>DEOC_METHO</name>
<sequence>MTELNKYIDHTNLSPSATSKDIDKLIQEAIKYDFKSVCIAPSYVKYAKEALKNSDVLVCTVIGFPLGYNATSVKVYETKIAVEHGADEIDMVINVGRFKDGQYEYVLNEIKAIKEACNGKTLKVIVETALLTKAELIKITELVMQSGADFIKTSTGFSYRGASFEDIQTMKETCGDKLLIKASGGIKNLADAQEMIRLGANVWVCLNQFQLWKNYLN</sequence>
<keyword id="KW-0963">Cytoplasm</keyword>
<keyword id="KW-0456">Lyase</keyword>
<keyword id="KW-0704">Schiff base</keyword>
<organism>
    <name type="scientific">Metamycoplasma hominis</name>
    <name type="common">Mycoplasma hominis</name>
    <dbReference type="NCBI Taxonomy" id="2098"/>
    <lineage>
        <taxon>Bacteria</taxon>
        <taxon>Bacillati</taxon>
        <taxon>Mycoplasmatota</taxon>
        <taxon>Mycoplasmoidales</taxon>
        <taxon>Metamycoplasmataceae</taxon>
        <taxon>Metamycoplasma</taxon>
    </lineage>
</organism>
<dbReference type="EC" id="4.1.2.4" evidence="1"/>
<dbReference type="EMBL" id="Z27121">
    <property type="protein sequence ID" value="CAA81646.1"/>
    <property type="molecule type" value="Genomic_DNA"/>
</dbReference>
<dbReference type="SMR" id="P43048"/>
<dbReference type="UniPathway" id="UPA00002">
    <property type="reaction ID" value="UER00468"/>
</dbReference>
<dbReference type="GO" id="GO:0005737">
    <property type="term" value="C:cytoplasm"/>
    <property type="evidence" value="ECO:0007669"/>
    <property type="project" value="UniProtKB-SubCell"/>
</dbReference>
<dbReference type="GO" id="GO:0004139">
    <property type="term" value="F:deoxyribose-phosphate aldolase activity"/>
    <property type="evidence" value="ECO:0007669"/>
    <property type="project" value="UniProtKB-UniRule"/>
</dbReference>
<dbReference type="GO" id="GO:0006018">
    <property type="term" value="P:2-deoxyribose 1-phosphate catabolic process"/>
    <property type="evidence" value="ECO:0007669"/>
    <property type="project" value="UniProtKB-UniRule"/>
</dbReference>
<dbReference type="GO" id="GO:0016052">
    <property type="term" value="P:carbohydrate catabolic process"/>
    <property type="evidence" value="ECO:0007669"/>
    <property type="project" value="TreeGrafter"/>
</dbReference>
<dbReference type="GO" id="GO:0009264">
    <property type="term" value="P:deoxyribonucleotide catabolic process"/>
    <property type="evidence" value="ECO:0007669"/>
    <property type="project" value="InterPro"/>
</dbReference>
<dbReference type="CDD" id="cd00959">
    <property type="entry name" value="DeoC"/>
    <property type="match status" value="1"/>
</dbReference>
<dbReference type="FunFam" id="3.20.20.70:FF:000044">
    <property type="entry name" value="Deoxyribose-phosphate aldolase"/>
    <property type="match status" value="1"/>
</dbReference>
<dbReference type="Gene3D" id="3.20.20.70">
    <property type="entry name" value="Aldolase class I"/>
    <property type="match status" value="1"/>
</dbReference>
<dbReference type="HAMAP" id="MF_00114">
    <property type="entry name" value="DeoC_type1"/>
    <property type="match status" value="1"/>
</dbReference>
<dbReference type="InterPro" id="IPR013785">
    <property type="entry name" value="Aldolase_TIM"/>
</dbReference>
<dbReference type="InterPro" id="IPR011343">
    <property type="entry name" value="DeoC"/>
</dbReference>
<dbReference type="InterPro" id="IPR002915">
    <property type="entry name" value="DeoC/FbaB/LacD_aldolase"/>
</dbReference>
<dbReference type="InterPro" id="IPR028581">
    <property type="entry name" value="DeoC_typeI"/>
</dbReference>
<dbReference type="NCBIfam" id="TIGR00126">
    <property type="entry name" value="deoC"/>
    <property type="match status" value="1"/>
</dbReference>
<dbReference type="PANTHER" id="PTHR10889">
    <property type="entry name" value="DEOXYRIBOSE-PHOSPHATE ALDOLASE"/>
    <property type="match status" value="1"/>
</dbReference>
<dbReference type="PANTHER" id="PTHR10889:SF1">
    <property type="entry name" value="DEOXYRIBOSE-PHOSPHATE ALDOLASE"/>
    <property type="match status" value="1"/>
</dbReference>
<dbReference type="Pfam" id="PF01791">
    <property type="entry name" value="DeoC"/>
    <property type="match status" value="1"/>
</dbReference>
<dbReference type="PIRSF" id="PIRSF001357">
    <property type="entry name" value="DeoC"/>
    <property type="match status" value="1"/>
</dbReference>
<dbReference type="SMART" id="SM01133">
    <property type="entry name" value="DeoC"/>
    <property type="match status" value="1"/>
</dbReference>
<dbReference type="SUPFAM" id="SSF51569">
    <property type="entry name" value="Aldolase"/>
    <property type="match status" value="1"/>
</dbReference>
<proteinExistence type="inferred from homology"/>